<comment type="subcellular location">
    <subcellularLocation>
        <location evidence="1">Spore core</location>
    </subcellularLocation>
</comment>
<comment type="induction">
    <text evidence="1">Expressed only in the forespore compartment of sporulating cells.</text>
</comment>
<comment type="similarity">
    <text evidence="1">Belongs to the SspH family.</text>
</comment>
<name>SSPH_HALH5</name>
<dbReference type="EMBL" id="BA000004">
    <property type="protein sequence ID" value="BAB05772.1"/>
    <property type="molecule type" value="Genomic_DNA"/>
</dbReference>
<dbReference type="PIR" id="E83906">
    <property type="entry name" value="E83906"/>
</dbReference>
<dbReference type="RefSeq" id="WP_010898211.1">
    <property type="nucleotide sequence ID" value="NC_002570.2"/>
</dbReference>
<dbReference type="SMR" id="Q9KB75"/>
<dbReference type="STRING" id="272558.gene:10727951"/>
<dbReference type="GeneID" id="87597620"/>
<dbReference type="KEGG" id="bha:BH2053"/>
<dbReference type="eggNOG" id="ENOG5033AUF">
    <property type="taxonomic scope" value="Bacteria"/>
</dbReference>
<dbReference type="HOGENOM" id="CLU_191960_2_1_9"/>
<dbReference type="OrthoDB" id="1683648at2"/>
<dbReference type="Proteomes" id="UP000001258">
    <property type="component" value="Chromosome"/>
</dbReference>
<dbReference type="GO" id="GO:0042601">
    <property type="term" value="C:endospore-forming forespore"/>
    <property type="evidence" value="ECO:0007669"/>
    <property type="project" value="InterPro"/>
</dbReference>
<dbReference type="GO" id="GO:0030436">
    <property type="term" value="P:asexual sporulation"/>
    <property type="evidence" value="ECO:0007669"/>
    <property type="project" value="UniProtKB-UniRule"/>
</dbReference>
<dbReference type="GO" id="GO:0030435">
    <property type="term" value="P:sporulation resulting in formation of a cellular spore"/>
    <property type="evidence" value="ECO:0007669"/>
    <property type="project" value="UniProtKB-KW"/>
</dbReference>
<dbReference type="HAMAP" id="MF_00667">
    <property type="entry name" value="SspH"/>
    <property type="match status" value="1"/>
</dbReference>
<dbReference type="InterPro" id="IPR012610">
    <property type="entry name" value="SASP_SspH"/>
</dbReference>
<dbReference type="NCBIfam" id="NF002867">
    <property type="entry name" value="PRK03174.1"/>
    <property type="match status" value="1"/>
</dbReference>
<dbReference type="NCBIfam" id="TIGR02861">
    <property type="entry name" value="SASP_H"/>
    <property type="match status" value="1"/>
</dbReference>
<dbReference type="Pfam" id="PF08141">
    <property type="entry name" value="SspH"/>
    <property type="match status" value="1"/>
</dbReference>
<protein>
    <recommendedName>
        <fullName evidence="1">Small, acid-soluble spore protein H</fullName>
        <shortName evidence="1">SASP H</shortName>
    </recommendedName>
</protein>
<reference key="1">
    <citation type="journal article" date="2000" name="Nucleic Acids Res.">
        <title>Complete genome sequence of the alkaliphilic bacterium Bacillus halodurans and genomic sequence comparison with Bacillus subtilis.</title>
        <authorList>
            <person name="Takami H."/>
            <person name="Nakasone K."/>
            <person name="Takaki Y."/>
            <person name="Maeno G."/>
            <person name="Sasaki R."/>
            <person name="Masui N."/>
            <person name="Fuji F."/>
            <person name="Hirama C."/>
            <person name="Nakamura Y."/>
            <person name="Ogasawara N."/>
            <person name="Kuhara S."/>
            <person name="Horikoshi K."/>
        </authorList>
    </citation>
    <scope>NUCLEOTIDE SEQUENCE [LARGE SCALE GENOMIC DNA]</scope>
    <source>
        <strain>ATCC BAA-125 / DSM 18197 / FERM 7344 / JCM 9153 / C-125</strain>
    </source>
</reference>
<gene>
    <name evidence="1" type="primary">sspH</name>
    <name type="ordered locus">BH2053</name>
</gene>
<evidence type="ECO:0000255" key="1">
    <source>
        <dbReference type="HAMAP-Rule" id="MF_00667"/>
    </source>
</evidence>
<organism>
    <name type="scientific">Halalkalibacterium halodurans (strain ATCC BAA-125 / DSM 18197 / FERM 7344 / JCM 9153 / C-125)</name>
    <name type="common">Bacillus halodurans</name>
    <dbReference type="NCBI Taxonomy" id="272558"/>
    <lineage>
        <taxon>Bacteria</taxon>
        <taxon>Bacillati</taxon>
        <taxon>Bacillota</taxon>
        <taxon>Bacilli</taxon>
        <taxon>Bacillales</taxon>
        <taxon>Bacillaceae</taxon>
        <taxon>Halalkalibacterium (ex Joshi et al. 2022)</taxon>
    </lineage>
</organism>
<accession>Q9KB75</accession>
<feature type="chain" id="PRO_0000162317" description="Small, acid-soluble spore protein H">
    <location>
        <begin position="1"/>
        <end position="60"/>
    </location>
</feature>
<keyword id="KW-1185">Reference proteome</keyword>
<keyword id="KW-0749">Sporulation</keyword>
<sequence>MLNTQRAQEIAASPIMANVTYQEVPIYIQHVDEQNETARIYPLDNPELEQDVPLSQLMEH</sequence>
<proteinExistence type="inferred from homology"/>